<accession>P0A428</accession>
<accession>P25900</accession>
<feature type="chain" id="PRO_0000194683" description="Photosystem I reaction center subunit VIII">
    <location>
        <begin position="1"/>
        <end position="38"/>
    </location>
</feature>
<feature type="transmembrane region" description="Helical" evidence="2">
    <location>
        <begin position="12"/>
        <end position="32"/>
    </location>
</feature>
<comment type="function">
    <text evidence="1">May help in the organization of the PsaL subunit.</text>
</comment>
<comment type="subcellular location">
    <subcellularLocation>
        <location evidence="1">Cellular thylakoid membrane</location>
        <topology evidence="1">Single-pass membrane protein</topology>
    </subcellularLocation>
</comment>
<comment type="similarity">
    <text evidence="3">Belongs to the PsaI family.</text>
</comment>
<dbReference type="EMBL" id="X63763">
    <property type="protein sequence ID" value="CAA45297.1"/>
    <property type="molecule type" value="Genomic_DNA"/>
</dbReference>
<dbReference type="SMR" id="P0A428"/>
<dbReference type="GO" id="GO:0009522">
    <property type="term" value="C:photosystem I"/>
    <property type="evidence" value="ECO:0007669"/>
    <property type="project" value="UniProtKB-KW"/>
</dbReference>
<dbReference type="GO" id="GO:0031676">
    <property type="term" value="C:plasma membrane-derived thylakoid membrane"/>
    <property type="evidence" value="ECO:0007669"/>
    <property type="project" value="UniProtKB-SubCell"/>
</dbReference>
<dbReference type="GO" id="GO:0015979">
    <property type="term" value="P:photosynthesis"/>
    <property type="evidence" value="ECO:0007669"/>
    <property type="project" value="UniProtKB-UniRule"/>
</dbReference>
<dbReference type="HAMAP" id="MF_00431">
    <property type="entry name" value="PSI_PsaI"/>
    <property type="match status" value="1"/>
</dbReference>
<dbReference type="InterPro" id="IPR001302">
    <property type="entry name" value="PSI_PsaI"/>
</dbReference>
<dbReference type="InterPro" id="IPR036357">
    <property type="entry name" value="PSI_PsaI_sf"/>
</dbReference>
<dbReference type="NCBIfam" id="NF008830">
    <property type="entry name" value="PRK11877.1"/>
    <property type="match status" value="1"/>
</dbReference>
<dbReference type="NCBIfam" id="TIGR03052">
    <property type="entry name" value="PS_I_psaI"/>
    <property type="match status" value="1"/>
</dbReference>
<dbReference type="Pfam" id="PF00796">
    <property type="entry name" value="PSI_8"/>
    <property type="match status" value="1"/>
</dbReference>
<dbReference type="SUPFAM" id="SSF81540">
    <property type="entry name" value="Subunit VIII of photosystem I reaction centre, PsaI"/>
    <property type="match status" value="1"/>
</dbReference>
<gene>
    <name type="primary">psaI</name>
</gene>
<evidence type="ECO:0000250" key="1"/>
<evidence type="ECO:0000255" key="2"/>
<evidence type="ECO:0000305" key="3"/>
<protein>
    <recommendedName>
        <fullName>Photosystem I reaction center subunit VIII</fullName>
    </recommendedName>
</protein>
<keyword id="KW-0472">Membrane</keyword>
<keyword id="KW-0602">Photosynthesis</keyword>
<keyword id="KW-0603">Photosystem I</keyword>
<keyword id="KW-0793">Thylakoid</keyword>
<keyword id="KW-0812">Transmembrane</keyword>
<keyword id="KW-1133">Transmembrane helix</keyword>
<sequence>MMGSYAASFLPWIFIPVVCWLMPTVVMGLLFLYIEGEA</sequence>
<proteinExistence type="inferred from homology"/>
<reference key="1">
    <citation type="journal article" date="1993" name="Gene">
        <title>Genes encoding eleven subunits of photosystem I from the thermophilic cyanobacterium Synechococcus sp.</title>
        <authorList>
            <person name="Muehlenhoff U."/>
            <person name="Haehnel W."/>
            <person name="Witt H.T."/>
            <person name="Herrmann R.G."/>
        </authorList>
    </citation>
    <scope>NUCLEOTIDE SEQUENCE [GENOMIC DNA]</scope>
</reference>
<organism>
    <name type="scientific">Synechococcus elongatus</name>
    <dbReference type="NCBI Taxonomy" id="32046"/>
    <lineage>
        <taxon>Bacteria</taxon>
        <taxon>Bacillati</taxon>
        <taxon>Cyanobacteriota</taxon>
        <taxon>Cyanophyceae</taxon>
        <taxon>Synechococcales</taxon>
        <taxon>Synechococcaceae</taxon>
        <taxon>Synechococcus</taxon>
    </lineage>
</organism>
<name>PSAI_SYNEL</name>